<accession>Q8U176</accession>
<gene>
    <name evidence="1" type="primary">thrS</name>
    <name type="ordered locus">PF1351</name>
</gene>
<organism>
    <name type="scientific">Pyrococcus furiosus (strain ATCC 43587 / DSM 3638 / JCM 8422 / Vc1)</name>
    <dbReference type="NCBI Taxonomy" id="186497"/>
    <lineage>
        <taxon>Archaea</taxon>
        <taxon>Methanobacteriati</taxon>
        <taxon>Methanobacteriota</taxon>
        <taxon>Thermococci</taxon>
        <taxon>Thermococcales</taxon>
        <taxon>Thermococcaceae</taxon>
        <taxon>Pyrococcus</taxon>
    </lineage>
</organism>
<name>SYT_PYRFU</name>
<proteinExistence type="evidence at protein level"/>
<reference key="1">
    <citation type="journal article" date="1999" name="Genetics">
        <title>Divergence of the hyperthermophilic archaea Pyrococcus furiosus and P. horikoshii inferred from complete genomic sequences.</title>
        <authorList>
            <person name="Maeder D.L."/>
            <person name="Weiss R.B."/>
            <person name="Dunn D.M."/>
            <person name="Cherry J.L."/>
            <person name="Gonzalez J.M."/>
            <person name="DiRuggiero J."/>
            <person name="Robb F.T."/>
        </authorList>
    </citation>
    <scope>NUCLEOTIDE SEQUENCE [LARGE SCALE GENOMIC DNA]</scope>
    <source>
        <strain>ATCC 43587 / DSM 3638 / JCM 8422 / Vc1</strain>
    </source>
</reference>
<reference key="2">
    <citation type="journal article" date="2015" name="Nat. Commun.">
        <title>Specificity and catalysis hardwired at the RNA-protein interface in a translational proofreading enzyme.</title>
        <authorList>
            <person name="Ahmad S."/>
            <person name="Muthukumar S."/>
            <person name="Kuncha S.K."/>
            <person name="Routh S.B."/>
            <person name="Yerabham A.S."/>
            <person name="Hussain T."/>
            <person name="Kamarthapu V."/>
            <person name="Kruparani S.P."/>
            <person name="Sankaranarayanan R."/>
        </authorList>
    </citation>
    <scope>FUNCTION IN EDITING</scope>
    <scope>DOMAIN</scope>
    <scope>MUTAGENESIS OF 120-TYR--GLU-134</scope>
</reference>
<comment type="function">
    <text evidence="1 2">Catalyzes the attachment of threonine to tRNA(Thr) in a two-step reaction: L-threonine is first activated by ATP to form Thr-AMP and then transferred to the acceptor end of tRNA(Thr) (By similarity). Also edits incorrectly charged L-seryl-tRNA(Thr) (PubMed:26113036).</text>
</comment>
<comment type="catalytic activity">
    <reaction evidence="1">
        <text>tRNA(Thr) + L-threonine + ATP = L-threonyl-tRNA(Thr) + AMP + diphosphate + H(+)</text>
        <dbReference type="Rhea" id="RHEA:24624"/>
        <dbReference type="Rhea" id="RHEA-COMP:9670"/>
        <dbReference type="Rhea" id="RHEA-COMP:9704"/>
        <dbReference type="ChEBI" id="CHEBI:15378"/>
        <dbReference type="ChEBI" id="CHEBI:30616"/>
        <dbReference type="ChEBI" id="CHEBI:33019"/>
        <dbReference type="ChEBI" id="CHEBI:57926"/>
        <dbReference type="ChEBI" id="CHEBI:78442"/>
        <dbReference type="ChEBI" id="CHEBI:78534"/>
        <dbReference type="ChEBI" id="CHEBI:456215"/>
        <dbReference type="EC" id="6.1.1.3"/>
    </reaction>
</comment>
<comment type="cofactor">
    <cofactor evidence="1">
        <name>Zn(2+)</name>
        <dbReference type="ChEBI" id="CHEBI:29105"/>
    </cofactor>
    <text evidence="1">Binds 1 zinc ion per subunit.</text>
</comment>
<comment type="subunit">
    <text evidence="1">Homodimer.</text>
</comment>
<comment type="subcellular location">
    <subcellularLocation>
        <location evidence="1">Cytoplasm</location>
    </subcellularLocation>
</comment>
<comment type="domain">
    <text evidence="1 2">The N-terminal domain (about residues 1-143) is an archaea-specific tRNA-editing domain (PubMed:26113036). Catalysis of tRNA editing is performed by the charged tRNA itself (By similarity).</text>
</comment>
<comment type="similarity">
    <text evidence="1">Belongs to the class-II aminoacyl-tRNA synthetase family.</text>
</comment>
<protein>
    <recommendedName>
        <fullName evidence="1">Threonine--tRNA ligase</fullName>
        <ecNumber evidence="1">6.1.1.3</ecNumber>
    </recommendedName>
    <alternativeName>
        <fullName evidence="1">Threonyl-tRNA synthetase</fullName>
        <shortName evidence="1">ThrRS</shortName>
    </alternativeName>
</protein>
<sequence>MRMLLIHSDYIEYEVKDKAIKNPEPISEEEKKGRMDEVLVAFISVEKVDEKNPDEVVEKAINEIIEVAKQVKAENLFVYPFAHLSSELAKPSVAQEVLRRIYEGLKERGYNVGKAPFGYYKAFRISCKGHPLAELSRTIVPEEAKVEEVPEALKKEETELVSYWYILTPEGELVEVDKFDFTGHENLRKFANYEIAKSRIADKEPPHVRLMLEHELVDYEPGSDPGNLRYYPKGRLIKSLLEQYVSEKVIEYGAMEVETPIMYDFEHPALEKYLNRFPARQYIVLSGDKRYFLRFAACFGQFMISKDATISYRNLPLRMYELTRYSFRREKRGELSGLRRLRAFTMPDMHTLAKDIEQAKDEFKKQFKLSMEVLGGVGLTPDDYEVAIRFTEDFWNEHKDFIIELVKLIGKPVLIEMWKQRFFYFILKFEFNFVDNLDKAAALSTVQIDVENAERFGITYYDENGEEKYPLILHCSPSGAIERVMYAILEKQAKLMQEGKKPMFPLWLSPIQVRVIPVSKEYLDYALYVAGKIEGARIRVDVDDEDERLSKKIRRAEKEWIPYIVVVGEKEKETGTITVRRREDGKQYETRIEELIKEIKQKTEGFPYKPRPLPLLLSQRPKFRG</sequence>
<keyword id="KW-0030">Aminoacyl-tRNA synthetase</keyword>
<keyword id="KW-0067">ATP-binding</keyword>
<keyword id="KW-0963">Cytoplasm</keyword>
<keyword id="KW-0436">Ligase</keyword>
<keyword id="KW-0479">Metal-binding</keyword>
<keyword id="KW-0547">Nucleotide-binding</keyword>
<keyword id="KW-0648">Protein biosynthesis</keyword>
<keyword id="KW-1185">Reference proteome</keyword>
<keyword id="KW-0694">RNA-binding</keyword>
<keyword id="KW-0820">tRNA-binding</keyword>
<keyword id="KW-0862">Zinc</keyword>
<dbReference type="EC" id="6.1.1.3" evidence="1"/>
<dbReference type="EMBL" id="AE009950">
    <property type="protein sequence ID" value="AAL81475.1"/>
    <property type="molecule type" value="Genomic_DNA"/>
</dbReference>
<dbReference type="RefSeq" id="WP_011012497.1">
    <property type="nucleotide sequence ID" value="NZ_CP023154.1"/>
</dbReference>
<dbReference type="SMR" id="Q8U176"/>
<dbReference type="STRING" id="186497.PF1351"/>
<dbReference type="PaxDb" id="186497-PF1351"/>
<dbReference type="KEGG" id="pfu:PF1351"/>
<dbReference type="PATRIC" id="fig|186497.12.peg.1413"/>
<dbReference type="eggNOG" id="arCOG00401">
    <property type="taxonomic scope" value="Archaea"/>
</dbReference>
<dbReference type="HOGENOM" id="CLU_029833_0_0_2"/>
<dbReference type="OrthoDB" id="372136at2157"/>
<dbReference type="PhylomeDB" id="Q8U176"/>
<dbReference type="BRENDA" id="6.1.1.3">
    <property type="organism ID" value="5243"/>
</dbReference>
<dbReference type="Proteomes" id="UP000001013">
    <property type="component" value="Chromosome"/>
</dbReference>
<dbReference type="GO" id="GO:0005737">
    <property type="term" value="C:cytoplasm"/>
    <property type="evidence" value="ECO:0007669"/>
    <property type="project" value="UniProtKB-SubCell"/>
</dbReference>
<dbReference type="GO" id="GO:0005524">
    <property type="term" value="F:ATP binding"/>
    <property type="evidence" value="ECO:0007669"/>
    <property type="project" value="UniProtKB-UniRule"/>
</dbReference>
<dbReference type="GO" id="GO:0004829">
    <property type="term" value="F:threonine-tRNA ligase activity"/>
    <property type="evidence" value="ECO:0007669"/>
    <property type="project" value="UniProtKB-UniRule"/>
</dbReference>
<dbReference type="GO" id="GO:0000049">
    <property type="term" value="F:tRNA binding"/>
    <property type="evidence" value="ECO:0007669"/>
    <property type="project" value="UniProtKB-KW"/>
</dbReference>
<dbReference type="GO" id="GO:0008270">
    <property type="term" value="F:zinc ion binding"/>
    <property type="evidence" value="ECO:0007669"/>
    <property type="project" value="InterPro"/>
</dbReference>
<dbReference type="GO" id="GO:0006435">
    <property type="term" value="P:threonyl-tRNA aminoacylation"/>
    <property type="evidence" value="ECO:0007669"/>
    <property type="project" value="UniProtKB-UniRule"/>
</dbReference>
<dbReference type="CDD" id="cd00860">
    <property type="entry name" value="ThrRS_anticodon"/>
    <property type="match status" value="1"/>
</dbReference>
<dbReference type="CDD" id="cd00771">
    <property type="entry name" value="ThrRS_core"/>
    <property type="match status" value="1"/>
</dbReference>
<dbReference type="FunFam" id="3.30.930.10:FF:000076">
    <property type="entry name" value="Threonine--tRNA ligase"/>
    <property type="match status" value="1"/>
</dbReference>
<dbReference type="FunFam" id="3.40.50.800:FF:000001">
    <property type="entry name" value="Threonine--tRNA ligase"/>
    <property type="match status" value="1"/>
</dbReference>
<dbReference type="FunFam" id="3.50.80.10:FF:000004">
    <property type="entry name" value="Threonine--tRNA ligase"/>
    <property type="match status" value="1"/>
</dbReference>
<dbReference type="Gene3D" id="3.40.50.800">
    <property type="entry name" value="Anticodon-binding domain"/>
    <property type="match status" value="1"/>
</dbReference>
<dbReference type="Gene3D" id="3.30.930.10">
    <property type="entry name" value="Bira Bifunctional Protein, Domain 2"/>
    <property type="match status" value="1"/>
</dbReference>
<dbReference type="Gene3D" id="3.50.80.10">
    <property type="entry name" value="D-tyrosyl-tRNA(Tyr) deacylase"/>
    <property type="match status" value="1"/>
</dbReference>
<dbReference type="HAMAP" id="MF_00184">
    <property type="entry name" value="Thr_tRNA_synth"/>
    <property type="match status" value="1"/>
</dbReference>
<dbReference type="InterPro" id="IPR002314">
    <property type="entry name" value="aa-tRNA-synt_IIb"/>
</dbReference>
<dbReference type="InterPro" id="IPR006195">
    <property type="entry name" value="aa-tRNA-synth_II"/>
</dbReference>
<dbReference type="InterPro" id="IPR045864">
    <property type="entry name" value="aa-tRNA-synth_II/BPL/LPL"/>
</dbReference>
<dbReference type="InterPro" id="IPR004154">
    <property type="entry name" value="Anticodon-bd"/>
</dbReference>
<dbReference type="InterPro" id="IPR036621">
    <property type="entry name" value="Anticodon-bd_dom_sf"/>
</dbReference>
<dbReference type="InterPro" id="IPR023509">
    <property type="entry name" value="DTD-like_sf"/>
</dbReference>
<dbReference type="InterPro" id="IPR002320">
    <property type="entry name" value="Thr-tRNA-ligase_IIa"/>
</dbReference>
<dbReference type="InterPro" id="IPR015011">
    <property type="entry name" value="Threonyl-tRNA_syn_edit_dom_arc"/>
</dbReference>
<dbReference type="InterPro" id="IPR047246">
    <property type="entry name" value="ThrRS_anticodon"/>
</dbReference>
<dbReference type="InterPro" id="IPR033728">
    <property type="entry name" value="ThrRS_core"/>
</dbReference>
<dbReference type="NCBIfam" id="NF003068">
    <property type="entry name" value="PRK03991.1"/>
    <property type="match status" value="1"/>
</dbReference>
<dbReference type="NCBIfam" id="TIGR00418">
    <property type="entry name" value="thrS"/>
    <property type="match status" value="1"/>
</dbReference>
<dbReference type="PANTHER" id="PTHR11451:SF44">
    <property type="entry name" value="THREONINE--TRNA LIGASE, CHLOROPLASTIC_MITOCHONDRIAL 2"/>
    <property type="match status" value="1"/>
</dbReference>
<dbReference type="PANTHER" id="PTHR11451">
    <property type="entry name" value="THREONINE-TRNA LIGASE"/>
    <property type="match status" value="1"/>
</dbReference>
<dbReference type="Pfam" id="PF03129">
    <property type="entry name" value="HGTP_anticodon"/>
    <property type="match status" value="1"/>
</dbReference>
<dbReference type="Pfam" id="PF00587">
    <property type="entry name" value="tRNA-synt_2b"/>
    <property type="match status" value="1"/>
</dbReference>
<dbReference type="Pfam" id="PF08915">
    <property type="entry name" value="tRNA-Thr_ED"/>
    <property type="match status" value="1"/>
</dbReference>
<dbReference type="PRINTS" id="PR01047">
    <property type="entry name" value="TRNASYNTHTHR"/>
</dbReference>
<dbReference type="SUPFAM" id="SSF52954">
    <property type="entry name" value="Class II aaRS ABD-related"/>
    <property type="match status" value="1"/>
</dbReference>
<dbReference type="SUPFAM" id="SSF55681">
    <property type="entry name" value="Class II aaRS and biotin synthetases"/>
    <property type="match status" value="1"/>
</dbReference>
<dbReference type="PROSITE" id="PS50862">
    <property type="entry name" value="AA_TRNA_LIGASE_II"/>
    <property type="match status" value="1"/>
</dbReference>
<feature type="chain" id="PRO_0000101109" description="Threonine--tRNA ligase">
    <location>
        <begin position="1"/>
        <end position="625"/>
    </location>
</feature>
<feature type="region of interest" description="Editing domain" evidence="1 3">
    <location>
        <begin position="1"/>
        <end position="147"/>
    </location>
</feature>
<feature type="region of interest" description="Catalytic" evidence="1">
    <location>
        <begin position="206"/>
        <end position="505"/>
    </location>
</feature>
<feature type="binding site" evidence="1">
    <location>
        <position position="298"/>
    </location>
    <ligand>
        <name>Zn(2+)</name>
        <dbReference type="ChEBI" id="CHEBI:29105"/>
    </ligand>
</feature>
<feature type="binding site" evidence="1">
    <location>
        <position position="350"/>
    </location>
    <ligand>
        <name>Zn(2+)</name>
        <dbReference type="ChEBI" id="CHEBI:29105"/>
    </ligand>
</feature>
<feature type="binding site" evidence="1">
    <location>
        <position position="474"/>
    </location>
    <ligand>
        <name>Zn(2+)</name>
        <dbReference type="ChEBI" id="CHEBI:29105"/>
    </ligand>
</feature>
<feature type="mutagenesis site" description="Isolated domain has nearly wild-type deacylation of mischarged L-seryl-tRNA(Thr), no activity on L-threonyl-tRNA(Thr)." evidence="2">
    <original>YKAFRISCKGHPLAE</original>
    <variation>AKAFRISCKGHPLAA</variation>
    <location>
        <begin position="120"/>
        <end position="134"/>
    </location>
</feature>
<evidence type="ECO:0000255" key="1">
    <source>
        <dbReference type="HAMAP-Rule" id="MF_00184"/>
    </source>
</evidence>
<evidence type="ECO:0000269" key="2">
    <source>
    </source>
</evidence>
<evidence type="ECO:0000305" key="3">
    <source>
    </source>
</evidence>